<protein>
    <recommendedName>
        <fullName>Globin-2 B chain</fullName>
    </recommendedName>
    <alternativeName>
        <fullName>Globin II B chain</fullName>
    </alternativeName>
    <alternativeName>
        <fullName>HBII-B</fullName>
    </alternativeName>
</protein>
<evidence type="ECO:0000250" key="1">
    <source>
        <dbReference type="UniProtKB" id="P04251"/>
    </source>
</evidence>
<evidence type="ECO:0000255" key="2">
    <source>
        <dbReference type="PROSITE-ProRule" id="PRU00238"/>
    </source>
</evidence>
<evidence type="ECO:0000269" key="3">
    <source>
    </source>
</evidence>
<evidence type="ECO:0007829" key="4">
    <source>
        <dbReference type="PDB" id="4HRR"/>
    </source>
</evidence>
<organism>
    <name type="scientific">Anadara inaequivalvis</name>
    <name type="common">Inequivalve ark</name>
    <name type="synonym">Scapharca inaequivalvis</name>
    <dbReference type="NCBI Taxonomy" id="2784303"/>
    <lineage>
        <taxon>Eukaryota</taxon>
        <taxon>Metazoa</taxon>
        <taxon>Spiralia</taxon>
        <taxon>Lophotrochozoa</taxon>
        <taxon>Mollusca</taxon>
        <taxon>Bivalvia</taxon>
        <taxon>Autobranchia</taxon>
        <taxon>Pteriomorphia</taxon>
        <taxon>Arcoida</taxon>
        <taxon>Arcoidea</taxon>
        <taxon>Arcidae</taxon>
        <taxon>Anadara</taxon>
    </lineage>
</organism>
<accession>P14822</accession>
<sequence length="151" mass="16436">SKVAELANAVVSNADQKDLLRMSWGVLSVDMEGTGLMLMANLFKTSPSAKGKFARLGDVSAGKDNSKLRGHSITLMYALQNFVDALDDVERLKCVVEKFAVNHINRQISADEFGEIVGPLRQTLKARMGNYFDEDTVSAWASLVAVVQASL</sequence>
<proteinExistence type="evidence at protein level"/>
<name>GLB2B_ANAIN</name>
<reference key="1">
    <citation type="journal article" date="1989" name="FEBS Lett.">
        <title>Scapharca hemoglobins, type cases of a novel mode of chain assembly and heme-heme communication. Amino acid sequence and subunit interactions of the tetrameric component.</title>
        <authorList>
            <person name="Petruzzelli R."/>
            <person name="Boffi A."/>
            <person name="Barra D."/>
            <person name="Bossa F."/>
            <person name="Ascoli F."/>
            <person name="Chiancone E."/>
        </authorList>
    </citation>
    <scope>PROTEIN SEQUENCE</scope>
</reference>
<reference key="2">
    <citation type="submission" date="1996-10" db="EMBL/GenBank/DDBJ databases">
        <authorList>
            <person name="Gambacurta A."/>
        </authorList>
    </citation>
    <scope>NUCLEOTIDE SEQUENCE [GENOMIC DNA] OF 42-114</scope>
</reference>
<reference key="3">
    <citation type="journal article" date="1995" name="J. Mol. Biol.">
        <title>The 2.0 A crystal structure of Scapharca tetrameric hemoglobin: cooperative dimers within an allosteric tetramer.</title>
        <authorList>
            <person name="Royer W.E. Jr."/>
            <person name="Heard K.S."/>
            <person name="Harrington D.J."/>
            <person name="Chiancone E."/>
        </authorList>
    </citation>
    <scope>X-RAY CRYSTALLOGRAPHY (2.0 ANGSTROMS) IN COMPLEX WITH HEME</scope>
    <scope>SUBUNIT</scope>
</reference>
<keyword id="KW-0002">3D-structure</keyword>
<keyword id="KW-0007">Acetylation</keyword>
<keyword id="KW-0903">Direct protein sequencing</keyword>
<keyword id="KW-0349">Heme</keyword>
<keyword id="KW-0408">Iron</keyword>
<keyword id="KW-0479">Metal-binding</keyword>
<keyword id="KW-0561">Oxygen transport</keyword>
<keyword id="KW-0813">Transport</keyword>
<comment type="subunit">
    <text evidence="3">Heterotetramer of two alpha chains and two beta chains.</text>
</comment>
<comment type="similarity">
    <text evidence="2">Belongs to the globin family.</text>
</comment>
<dbReference type="EMBL" id="X98565">
    <property type="protein sequence ID" value="CAA67175.1"/>
    <property type="molecule type" value="Genomic_DNA"/>
</dbReference>
<dbReference type="PIR" id="S09068">
    <property type="entry name" value="S09068"/>
</dbReference>
<dbReference type="PDB" id="4HRR">
    <property type="method" value="X-ray"/>
    <property type="resolution" value="1.25 A"/>
    <property type="chains" value="B/D/F/H=3-149"/>
</dbReference>
<dbReference type="PDB" id="4HRT">
    <property type="method" value="X-ray"/>
    <property type="resolution" value="1.46 A"/>
    <property type="chains" value="B/D/F/H=3-149"/>
</dbReference>
<dbReference type="PDBsum" id="4HRR"/>
<dbReference type="PDBsum" id="4HRT"/>
<dbReference type="SMR" id="P14822"/>
<dbReference type="EvolutionaryTrace" id="P14822"/>
<dbReference type="GO" id="GO:0020037">
    <property type="term" value="F:heme binding"/>
    <property type="evidence" value="ECO:0007669"/>
    <property type="project" value="InterPro"/>
</dbReference>
<dbReference type="GO" id="GO:0046872">
    <property type="term" value="F:metal ion binding"/>
    <property type="evidence" value="ECO:0007669"/>
    <property type="project" value="UniProtKB-KW"/>
</dbReference>
<dbReference type="GO" id="GO:0019825">
    <property type="term" value="F:oxygen binding"/>
    <property type="evidence" value="ECO:0007669"/>
    <property type="project" value="InterPro"/>
</dbReference>
<dbReference type="GO" id="GO:0005344">
    <property type="term" value="F:oxygen carrier activity"/>
    <property type="evidence" value="ECO:0007669"/>
    <property type="project" value="UniProtKB-KW"/>
</dbReference>
<dbReference type="CDD" id="cd01040">
    <property type="entry name" value="Mb-like"/>
    <property type="match status" value="1"/>
</dbReference>
<dbReference type="Gene3D" id="1.10.490.10">
    <property type="entry name" value="Globins"/>
    <property type="match status" value="1"/>
</dbReference>
<dbReference type="InterPro" id="IPR000971">
    <property type="entry name" value="Globin"/>
</dbReference>
<dbReference type="InterPro" id="IPR050532">
    <property type="entry name" value="Globin-like_OT"/>
</dbReference>
<dbReference type="InterPro" id="IPR009050">
    <property type="entry name" value="Globin-like_sf"/>
</dbReference>
<dbReference type="InterPro" id="IPR012292">
    <property type="entry name" value="Globin/Proto"/>
</dbReference>
<dbReference type="InterPro" id="IPR044399">
    <property type="entry name" value="Mb-like_M"/>
</dbReference>
<dbReference type="PANTHER" id="PTHR46458">
    <property type="entry name" value="BLR2807 PROTEIN"/>
    <property type="match status" value="1"/>
</dbReference>
<dbReference type="PANTHER" id="PTHR46458:SF1">
    <property type="entry name" value="GEO09476P1"/>
    <property type="match status" value="1"/>
</dbReference>
<dbReference type="Pfam" id="PF00042">
    <property type="entry name" value="Globin"/>
    <property type="match status" value="1"/>
</dbReference>
<dbReference type="SUPFAM" id="SSF46458">
    <property type="entry name" value="Globin-like"/>
    <property type="match status" value="1"/>
</dbReference>
<dbReference type="PROSITE" id="PS01033">
    <property type="entry name" value="GLOBIN"/>
    <property type="match status" value="1"/>
</dbReference>
<feature type="chain" id="PRO_0000052489" description="Globin-2 B chain">
    <location>
        <begin position="1"/>
        <end position="151"/>
    </location>
</feature>
<feature type="domain" description="Globin" evidence="2">
    <location>
        <begin position="11"/>
        <end position="151"/>
    </location>
</feature>
<feature type="binding site" description="proximal binding residue">
    <location>
        <position position="103"/>
    </location>
    <ligand>
        <name>heme b</name>
        <dbReference type="ChEBI" id="CHEBI:60344"/>
    </ligand>
    <ligandPart>
        <name>Fe</name>
        <dbReference type="ChEBI" id="CHEBI:18248"/>
    </ligandPart>
</feature>
<feature type="modified residue" description="N-acetylserine" evidence="1">
    <location>
        <position position="1"/>
    </location>
</feature>
<feature type="helix" evidence="4">
    <location>
        <begin position="3"/>
        <end position="11"/>
    </location>
</feature>
<feature type="helix" evidence="4">
    <location>
        <begin position="14"/>
        <end position="27"/>
    </location>
</feature>
<feature type="turn" evidence="4">
    <location>
        <begin position="28"/>
        <end position="30"/>
    </location>
</feature>
<feature type="helix" evidence="4">
    <location>
        <begin position="31"/>
        <end position="45"/>
    </location>
</feature>
<feature type="helix" evidence="4">
    <location>
        <begin position="49"/>
        <end position="52"/>
    </location>
</feature>
<feature type="helix" evidence="4">
    <location>
        <begin position="53"/>
        <end position="56"/>
    </location>
</feature>
<feature type="helix" evidence="4">
    <location>
        <begin position="62"/>
        <end position="64"/>
    </location>
</feature>
<feature type="helix" evidence="4">
    <location>
        <begin position="66"/>
        <end position="84"/>
    </location>
</feature>
<feature type="turn" evidence="4">
    <location>
        <begin position="85"/>
        <end position="87"/>
    </location>
</feature>
<feature type="helix" evidence="4">
    <location>
        <begin position="89"/>
        <end position="104"/>
    </location>
</feature>
<feature type="turn" evidence="4">
    <location>
        <begin position="105"/>
        <end position="107"/>
    </location>
</feature>
<feature type="helix" evidence="4">
    <location>
        <begin position="110"/>
        <end position="113"/>
    </location>
</feature>
<feature type="helix" evidence="4">
    <location>
        <begin position="114"/>
        <end position="116"/>
    </location>
</feature>
<feature type="helix" evidence="4">
    <location>
        <begin position="117"/>
        <end position="128"/>
    </location>
</feature>
<feature type="helix" evidence="4">
    <location>
        <begin position="129"/>
        <end position="131"/>
    </location>
</feature>
<feature type="helix" evidence="4">
    <location>
        <begin position="134"/>
        <end position="150"/>
    </location>
</feature>